<dbReference type="EC" id="7.1.1.9"/>
<dbReference type="EMBL" id="X01094">
    <property type="status" value="NOT_ANNOTATED_CDS"/>
    <property type="molecule type" value="Genomic_DNA"/>
</dbReference>
<dbReference type="SMR" id="P04372"/>
<dbReference type="GO" id="GO:0005743">
    <property type="term" value="C:mitochondrial inner membrane"/>
    <property type="evidence" value="ECO:0007669"/>
    <property type="project" value="UniProtKB-SubCell"/>
</dbReference>
<dbReference type="GO" id="GO:0005507">
    <property type="term" value="F:copper ion binding"/>
    <property type="evidence" value="ECO:0007669"/>
    <property type="project" value="InterPro"/>
</dbReference>
<dbReference type="GO" id="GO:0004129">
    <property type="term" value="F:cytochrome-c oxidase activity"/>
    <property type="evidence" value="ECO:0007669"/>
    <property type="project" value="UniProtKB-EC"/>
</dbReference>
<dbReference type="GO" id="GO:0042773">
    <property type="term" value="P:ATP synthesis coupled electron transport"/>
    <property type="evidence" value="ECO:0007669"/>
    <property type="project" value="TreeGrafter"/>
</dbReference>
<dbReference type="Gene3D" id="1.10.287.90">
    <property type="match status" value="1"/>
</dbReference>
<dbReference type="Gene3D" id="2.60.40.420">
    <property type="entry name" value="Cupredoxins - blue copper proteins"/>
    <property type="match status" value="1"/>
</dbReference>
<dbReference type="InterPro" id="IPR045187">
    <property type="entry name" value="CcO_II"/>
</dbReference>
<dbReference type="InterPro" id="IPR002429">
    <property type="entry name" value="CcO_II-like_C"/>
</dbReference>
<dbReference type="InterPro" id="IPR001505">
    <property type="entry name" value="Copper_CuA"/>
</dbReference>
<dbReference type="InterPro" id="IPR008972">
    <property type="entry name" value="Cupredoxin"/>
</dbReference>
<dbReference type="InterPro" id="IPR036257">
    <property type="entry name" value="Cyt_c_oxidase_su2_TM_sf"/>
</dbReference>
<dbReference type="PANTHER" id="PTHR22888:SF9">
    <property type="entry name" value="CYTOCHROME C OXIDASE SUBUNIT 2"/>
    <property type="match status" value="1"/>
</dbReference>
<dbReference type="PANTHER" id="PTHR22888">
    <property type="entry name" value="CYTOCHROME C OXIDASE, SUBUNIT II"/>
    <property type="match status" value="1"/>
</dbReference>
<dbReference type="Pfam" id="PF00116">
    <property type="entry name" value="COX2"/>
    <property type="match status" value="1"/>
</dbReference>
<dbReference type="PRINTS" id="PR01166">
    <property type="entry name" value="CYCOXIDASEII"/>
</dbReference>
<dbReference type="SUPFAM" id="SSF49503">
    <property type="entry name" value="Cupredoxins"/>
    <property type="match status" value="1"/>
</dbReference>
<dbReference type="PROSITE" id="PS00078">
    <property type="entry name" value="COX2"/>
    <property type="match status" value="1"/>
</dbReference>
<dbReference type="PROSITE" id="PS50857">
    <property type="entry name" value="COX2_CUA"/>
    <property type="match status" value="1"/>
</dbReference>
<comment type="function">
    <text evidence="1">Component of the cytochrome c oxidase, the last enzyme in the mitochondrial electron transport chain which drives oxidative phosphorylation. The respiratory chain contains 3 multisubunit complexes succinate dehydrogenase (complex II, CII), ubiquinol-cytochrome c oxidoreductase (cytochrome b-c1 complex, complex III, CIII) and cytochrome c oxidase (complex IV, CIV), that cooperate to transfer electrons derived from NADH and succinate to molecular oxygen, creating an electrochemical gradient over the inner membrane that drives transmembrane transport and the ATP synthase. Cytochrome c oxidase is the component of the respiratory chain that catalyzes the reduction of oxygen to water. Electrons originating from reduced cytochrome c in the intermembrane space (IMS) are transferred via the dinuclear copper A center (CU(A)) of subunit 2 and heme A of subunit 1 to the active site in subunit 1, a binuclear center (BNC) formed by heme A3 and copper B (CU(B)). The BNC reduces molecular oxygen to 2 water molecules using 4 electrons from cytochrome c in the IMS and 4 protons from the mitochondrial matrix.</text>
</comment>
<comment type="catalytic activity">
    <reaction evidence="1">
        <text>4 Fe(II)-[cytochrome c] + O2 + 8 H(+)(in) = 4 Fe(III)-[cytochrome c] + 2 H2O + 4 H(+)(out)</text>
        <dbReference type="Rhea" id="RHEA:11436"/>
        <dbReference type="Rhea" id="RHEA-COMP:10350"/>
        <dbReference type="Rhea" id="RHEA-COMP:14399"/>
        <dbReference type="ChEBI" id="CHEBI:15377"/>
        <dbReference type="ChEBI" id="CHEBI:15378"/>
        <dbReference type="ChEBI" id="CHEBI:15379"/>
        <dbReference type="ChEBI" id="CHEBI:29033"/>
        <dbReference type="ChEBI" id="CHEBI:29034"/>
        <dbReference type="EC" id="7.1.1.9"/>
    </reaction>
    <physiologicalReaction direction="left-to-right" evidence="1">
        <dbReference type="Rhea" id="RHEA:11437"/>
    </physiologicalReaction>
</comment>
<comment type="cofactor">
    <cofactor evidence="1">
        <name>Cu cation</name>
        <dbReference type="ChEBI" id="CHEBI:23378"/>
    </cofactor>
    <text evidence="1">Binds a dinuclear copper A center per subunit.</text>
</comment>
<comment type="subunit">
    <text evidence="1">Component of the cytochrome c oxidase (complex IV, CIV), a multisubunit enzyme composed of a catalytic core of 3 subunits and several supernumerary subunits. The complex exists as a monomer or a dimer and forms supercomplexes (SCs) in the inner mitochondrial membrane with ubiquinol-cytochrome c oxidoreductase (cytochrome b-c1 complex, complex III, CIII).</text>
</comment>
<comment type="subcellular location">
    <subcellularLocation>
        <location evidence="1">Mitochondrion inner membrane</location>
        <topology evidence="1">Multi-pass membrane protein</topology>
    </subcellularLocation>
</comment>
<comment type="RNA editing" locationType="Not_applicable">
    <text evidence="3">Some positions are modified by RNA editing via nucleotide insertion.</text>
</comment>
<comment type="similarity">
    <text evidence="4">Belongs to the cytochrome c oxidase subunit 2 family.</text>
</comment>
<accession>P04372</accession>
<proteinExistence type="evidence at transcript level"/>
<evidence type="ECO:0000250" key="1">
    <source>
        <dbReference type="UniProtKB" id="P00410"/>
    </source>
</evidence>
<evidence type="ECO:0000255" key="2"/>
<evidence type="ECO:0000269" key="3">
    <source>
    </source>
</evidence>
<evidence type="ECO:0000305" key="4"/>
<geneLocation type="mitochondrion"/>
<reference key="1">
    <citation type="journal article" date="1986" name="Cell">
        <title>Major transcript of the frameshifted coxII gene from trypanosome mitochondria contains four nucleotides that are not encoded in the DNA.</title>
        <authorList>
            <person name="Benne R."/>
            <person name="van den Burg J."/>
            <person name="Brakenhoff J.P.J."/>
            <person name="Sloof P."/>
            <person name="van Boom J.H."/>
            <person name="Tromp M.C."/>
        </authorList>
    </citation>
    <scope>NUCLEOTIDE SEQUENCE [GENOMIC DNA]</scope>
    <scope>RNA EDITING</scope>
</reference>
<reference key="2">
    <citation type="journal article" date="1984" name="Nucleic Acids Res.">
        <title>The sequence of the gene for cytochrome c oxidase subunit I, a frameshift containing gene for cytochrome c oxidase subunit II and seven unassigned reading frames in Trypanosoma brucei mitochondrial maxi-circle DNA.</title>
        <authorList>
            <person name="Hensgens L.A.M."/>
            <person name="Brakenhoff J."/>
            <person name="de Vries B.F."/>
            <person name="Sloof P."/>
            <person name="Tromp M.C."/>
            <person name="van Boom J.H."/>
            <person name="Benne R."/>
        </authorList>
    </citation>
    <scope>NUCLEOTIDE SEQUENCE [GENOMIC DNA]</scope>
</reference>
<protein>
    <recommendedName>
        <fullName>Cytochrome c oxidase subunit 2</fullName>
        <ecNumber>7.1.1.9</ecNumber>
    </recommendedName>
    <alternativeName>
        <fullName>Cytochrome c oxidase polypeptide II</fullName>
    </alternativeName>
</protein>
<name>COX2_TRYBB</name>
<sequence length="210" mass="24220">MSFILTFWMIFLMDSIIVLISFSIFLSVWICALIIATVLTVTKINNIYCTWDFISSKFIDTYWFVLGMMFILCLLLRLCLLLYFSCINFVSFDLCKVIGFQWYWVYFLFGETTIFSNLILESDYLIGDLRILQCNHVLTLLSLVIYKLWVSAVDVIHSFTISSLGIKVDCIPGRCNEIILFATNNATLYGQCSELCGVLHGFMPIVINFI</sequence>
<gene>
    <name type="primary">COXII</name>
</gene>
<keyword id="KW-0186">Copper</keyword>
<keyword id="KW-0249">Electron transport</keyword>
<keyword id="KW-0460">Magnesium</keyword>
<keyword id="KW-0472">Membrane</keyword>
<keyword id="KW-0479">Metal-binding</keyword>
<keyword id="KW-0496">Mitochondrion</keyword>
<keyword id="KW-0999">Mitochondrion inner membrane</keyword>
<keyword id="KW-0679">Respiratory chain</keyword>
<keyword id="KW-0691">RNA editing</keyword>
<keyword id="KW-1278">Translocase</keyword>
<keyword id="KW-0812">Transmembrane</keyword>
<keyword id="KW-1133">Transmembrane helix</keyword>
<keyword id="KW-0813">Transport</keyword>
<feature type="chain" id="PRO_0000183707" description="Cytochrome c oxidase subunit 2">
    <location>
        <begin position="1"/>
        <end position="210"/>
    </location>
</feature>
<feature type="topological domain" description="Mitochondrial intermembrane" evidence="2">
    <location>
        <begin position="1"/>
        <end position="15"/>
    </location>
</feature>
<feature type="transmembrane region" description="Helical" evidence="2">
    <location>
        <begin position="16"/>
        <end position="36"/>
    </location>
</feature>
<feature type="topological domain" description="Mitochondrial matrix" evidence="2">
    <location>
        <begin position="37"/>
        <end position="63"/>
    </location>
</feature>
<feature type="transmembrane region" description="Helical" evidence="2">
    <location>
        <begin position="64"/>
        <end position="84"/>
    </location>
</feature>
<feature type="topological domain" description="Mitochondrial intermembrane" evidence="2">
    <location>
        <begin position="85"/>
        <end position="210"/>
    </location>
</feature>
<feature type="binding site" evidence="1">
    <location>
        <position position="157"/>
    </location>
    <ligand>
        <name>Cu cation</name>
        <dbReference type="ChEBI" id="CHEBI:23378"/>
        <label>A1</label>
    </ligand>
</feature>
<feature type="binding site" evidence="1">
    <location>
        <position position="192"/>
    </location>
    <ligand>
        <name>Cu cation</name>
        <dbReference type="ChEBI" id="CHEBI:23378"/>
        <label>A1</label>
    </ligand>
</feature>
<feature type="binding site" evidence="1">
    <location>
        <position position="192"/>
    </location>
    <ligand>
        <name>Cu cation</name>
        <dbReference type="ChEBI" id="CHEBI:23378"/>
        <label>A2</label>
    </ligand>
</feature>
<feature type="binding site" evidence="1">
    <location>
        <position position="194"/>
    </location>
    <ligand>
        <name>Cu cation</name>
        <dbReference type="ChEBI" id="CHEBI:23378"/>
        <label>A2</label>
    </ligand>
</feature>
<feature type="binding site" evidence="1">
    <location>
        <position position="194"/>
    </location>
    <ligand>
        <name>Mg(2+)</name>
        <dbReference type="ChEBI" id="CHEBI:18420"/>
        <note>ligand shared with subunit 1</note>
    </ligand>
</feature>
<feature type="binding site" evidence="1">
    <location>
        <position position="196"/>
    </location>
    <ligand>
        <name>Cu cation</name>
        <dbReference type="ChEBI" id="CHEBI:23378"/>
        <label>A1</label>
    </ligand>
</feature>
<feature type="binding site" evidence="1">
    <location>
        <position position="196"/>
    </location>
    <ligand>
        <name>Cu cation</name>
        <dbReference type="ChEBI" id="CHEBI:23378"/>
        <label>A2</label>
    </ligand>
</feature>
<feature type="binding site" evidence="1">
    <location>
        <position position="200"/>
    </location>
    <ligand>
        <name>Cu cation</name>
        <dbReference type="ChEBI" id="CHEBI:23378"/>
        <label>A2</label>
    </ligand>
</feature>
<feature type="binding site" evidence="1">
    <location>
        <position position="203"/>
    </location>
    <ligand>
        <name>Cu cation</name>
        <dbReference type="ChEBI" id="CHEBI:23378"/>
        <label>A1</label>
    </ligand>
</feature>
<organism>
    <name type="scientific">Trypanosoma brucei brucei</name>
    <dbReference type="NCBI Taxonomy" id="5702"/>
    <lineage>
        <taxon>Eukaryota</taxon>
        <taxon>Discoba</taxon>
        <taxon>Euglenozoa</taxon>
        <taxon>Kinetoplastea</taxon>
        <taxon>Metakinetoplastina</taxon>
        <taxon>Trypanosomatida</taxon>
        <taxon>Trypanosomatidae</taxon>
        <taxon>Trypanosoma</taxon>
    </lineage>
</organism>